<accession>Q9CRD0</accession>
<accession>Q3TEC2</accession>
<accession>Q3TJS3</accession>
<accession>Q7TNB3</accession>
<accession>Q922M2</accession>
<evidence type="ECO:0000250" key="1">
    <source>
        <dbReference type="UniProtKB" id="Q9NX40"/>
    </source>
</evidence>
<evidence type="ECO:0000256" key="2">
    <source>
        <dbReference type="SAM" id="MobiDB-lite"/>
    </source>
</evidence>
<evidence type="ECO:0000269" key="3">
    <source>
    </source>
</evidence>
<evidence type="ECO:0000269" key="4">
    <source>
    </source>
</evidence>
<evidence type="ECO:0000303" key="5">
    <source>
    </source>
</evidence>
<evidence type="ECO:0000303" key="6">
    <source>
    </source>
</evidence>
<evidence type="ECO:0000303" key="7">
    <source>
    </source>
</evidence>
<evidence type="ECO:0000305" key="8"/>
<evidence type="ECO:0000312" key="9">
    <source>
        <dbReference type="MGI" id="MGI:1915345"/>
    </source>
</evidence>
<evidence type="ECO:0007744" key="10">
    <source>
    </source>
</evidence>
<evidence type="ECO:0007744" key="11">
    <source>
    </source>
</evidence>
<comment type="function">
    <text evidence="4">Maintains stem cell potency (PubMed:23972987). Increases STAT3 phosphorylation and controls ERK phosphorylation (PubMed:23972987). May act as a scaffold, increasing STAT3 recruitment onto endosomes (PubMed:23972987).</text>
</comment>
<comment type="subunit">
    <text evidence="1 4">Interacts with OCIAD2 (By similarity). Interacts with STAT3.</text>
</comment>
<comment type="subcellular location">
    <subcellularLocation>
        <location evidence="3 4">Endosome</location>
    </subcellularLocation>
</comment>
<comment type="alternative products">
    <event type="alternative splicing"/>
    <isoform>
        <id>Q9CRD0-1</id>
        <name>1</name>
        <sequence type="displayed"/>
    </isoform>
    <isoform>
        <id>Q9CRD0-2</id>
        <name>2</name>
        <sequence type="described" ref="VSP_027623"/>
    </isoform>
    <isoform>
        <id>Q9CRD0-3</id>
        <name>3</name>
        <sequence type="described" ref="VSP_027624 VSP_027625"/>
    </isoform>
</comment>
<comment type="tissue specificity">
    <text evidence="3">Expressed at high levels in the brain and at lower levels in the heart, ovary, testis and kidney. Expression is strongest in embryonic stem cells and in the blood vessels.</text>
</comment>
<comment type="developmental stage">
    <text evidence="3">First detected at 6.5 dpc in the primitive streak region of the epiblast and extraembryonic vasculature. Expression in the 8.5 dpc yolk sac is seen within blood islands and the capillary plexus. As embryogenesis proceeds, expression becomes prominent in the blood islands and the primitive blood vessels of the yolk sac. By 8-8.5 dpc, a more generalized expression pattern is seen in the neural folds and caudally in the presomitic mesoderm and primitive streak regions. A definite increase in vascular expression is seen in the embryo by 9.5 dpc. Tissue-specific expression is initially seen from early 9.5 dpc in the anterior-most regions of the head, mainly in the optic vesicle and branchial arches. At 11.5 dpc and 13.5 dpc, strong expression is seen in the embryonic stem cells of the blood vessels, especially in the capillaries of the brain and in the hyaline vasculature of the eye. Weak expression is also seen in the lingual vessels and in the neural crest-derived regions of the jaw. A rapid increase in expression in the trunk is seen between 9.5 dpc and 10.5 dpc and by 13.5 dpc, expression is more localized. Expression is not detected in the embryonic heart at early 9.5 dpc and from 11.5 dpc onward, increasing expression is seen in the atrium, ventricle, and outflow tracts of the heart.</text>
</comment>
<comment type="induction">
    <text evidence="4">Expression is down-regulated as differentiation proceeds in stem cells.</text>
</comment>
<comment type="domain">
    <text evidence="4">The OCIA domain is necessary and sufficient for endosomal localization (PubMed:23972987).</text>
</comment>
<comment type="miscellaneous">
    <text>'Asrij' stands for 'blood' in Sanskrit as this protein is strongly expressed in blood vessels.</text>
</comment>
<comment type="similarity">
    <text evidence="8">Belongs to the OCIAD1 family.</text>
</comment>
<comment type="sequence caution" evidence="8">
    <conflict type="frameshift">
        <sequence resource="EMBL-CDS" id="BAE39422"/>
    </conflict>
</comment>
<protein>
    <recommendedName>
        <fullName>OCIA domain-containing protein 1</fullName>
    </recommendedName>
</protein>
<sequence length="247" mass="27610">MNGRADFREPNAQVSRPIPDIGGGYIPTEEEWRLFAECHEECFWFRSVPLAATSMLITQGLISKGILSSHPKYGSIPKLLFACIVGYFAGKLSYVKTCQEKFKKLENSPLGEALRSGELRRSSPPGHYTQKPKFDSNVSGQSSFGTSPAADNIEKEALPRYEPIPFSASMNESTPTGITDHIAQGPEPNLEESPKRKGVTYEELRSKNRESYGVTLPHKTDPSVRPMQERVPKKEVKVNKYGDTWDE</sequence>
<dbReference type="EMBL" id="AF295357">
    <property type="protein sequence ID" value="AAG59858.1"/>
    <property type="molecule type" value="mRNA"/>
</dbReference>
<dbReference type="EMBL" id="AF295358">
    <property type="protein sequence ID" value="AAG59859.1"/>
    <property type="molecule type" value="Genomic_DNA"/>
</dbReference>
<dbReference type="EMBL" id="AY208935">
    <property type="protein sequence ID" value="AAP41523.1"/>
    <property type="molecule type" value="mRNA"/>
</dbReference>
<dbReference type="EMBL" id="AK006013">
    <property type="protein sequence ID" value="BAB24366.1"/>
    <property type="molecule type" value="mRNA"/>
</dbReference>
<dbReference type="EMBL" id="AK007636">
    <property type="protein sequence ID" value="BAB25152.1"/>
    <property type="molecule type" value="mRNA"/>
</dbReference>
<dbReference type="EMBL" id="AK043603">
    <property type="protein sequence ID" value="BAC31593.1"/>
    <property type="molecule type" value="mRNA"/>
</dbReference>
<dbReference type="EMBL" id="AK077904">
    <property type="protein sequence ID" value="BAC37055.1"/>
    <property type="molecule type" value="mRNA"/>
</dbReference>
<dbReference type="EMBL" id="AK078102">
    <property type="protein sequence ID" value="BAC37125.1"/>
    <property type="molecule type" value="mRNA"/>
</dbReference>
<dbReference type="EMBL" id="AK078909">
    <property type="protein sequence ID" value="BAC37453.1"/>
    <property type="molecule type" value="mRNA"/>
</dbReference>
<dbReference type="EMBL" id="AK080795">
    <property type="protein sequence ID" value="BAC38024.1"/>
    <property type="molecule type" value="mRNA"/>
</dbReference>
<dbReference type="EMBL" id="AK082769">
    <property type="protein sequence ID" value="BAC38610.1"/>
    <property type="molecule type" value="mRNA"/>
</dbReference>
<dbReference type="EMBL" id="AK082781">
    <property type="protein sequence ID" value="BAC38616.1"/>
    <property type="molecule type" value="mRNA"/>
</dbReference>
<dbReference type="EMBL" id="AK159811">
    <property type="protein sequence ID" value="BAE35391.1"/>
    <property type="molecule type" value="mRNA"/>
</dbReference>
<dbReference type="EMBL" id="AK167320">
    <property type="protein sequence ID" value="BAE39422.1"/>
    <property type="status" value="ALT_FRAME"/>
    <property type="molecule type" value="mRNA"/>
</dbReference>
<dbReference type="EMBL" id="AK169715">
    <property type="protein sequence ID" value="BAE41326.1"/>
    <property type="molecule type" value="mRNA"/>
</dbReference>
<dbReference type="EMBL" id="BC006937">
    <property type="protein sequence ID" value="AAH06937.1"/>
    <property type="molecule type" value="mRNA"/>
</dbReference>
<dbReference type="CCDS" id="CCDS19339.1">
    <molecule id="Q9CRD0-1"/>
</dbReference>
<dbReference type="CCDS" id="CCDS51518.1">
    <molecule id="Q9CRD0-3"/>
</dbReference>
<dbReference type="CCDS" id="CCDS80300.1">
    <molecule id="Q9CRD0-2"/>
</dbReference>
<dbReference type="RefSeq" id="NP_001153359.1">
    <molecule id="Q9CRD0-2"/>
    <property type="nucleotide sequence ID" value="NM_001159887.1"/>
</dbReference>
<dbReference type="RefSeq" id="NP_001153360.1">
    <molecule id="Q9CRD0-3"/>
    <property type="nucleotide sequence ID" value="NM_001159888.1"/>
</dbReference>
<dbReference type="RefSeq" id="NP_001153361.1">
    <molecule id="Q9CRD0-3"/>
    <property type="nucleotide sequence ID" value="NM_001159889.1"/>
</dbReference>
<dbReference type="RefSeq" id="NP_075918.1">
    <molecule id="Q9CRD0-1"/>
    <property type="nucleotide sequence ID" value="NM_023429.4"/>
</dbReference>
<dbReference type="RefSeq" id="XP_006504138.1">
    <molecule id="Q9CRD0-1"/>
    <property type="nucleotide sequence ID" value="XM_006504075.4"/>
</dbReference>
<dbReference type="RefSeq" id="XP_006504139.1">
    <molecule id="Q9CRD0-1"/>
    <property type="nucleotide sequence ID" value="XM_006504076.5"/>
</dbReference>
<dbReference type="RefSeq" id="XP_017176571.1">
    <molecule id="Q9CRD0-2"/>
    <property type="nucleotide sequence ID" value="XM_017321082.2"/>
</dbReference>
<dbReference type="RefSeq" id="XP_017176572.1">
    <molecule id="Q9CRD0-3"/>
    <property type="nucleotide sequence ID" value="XM_017321083.3"/>
</dbReference>
<dbReference type="RefSeq" id="XP_030110639.1">
    <molecule id="Q9CRD0-1"/>
    <property type="nucleotide sequence ID" value="XM_030254779.2"/>
</dbReference>
<dbReference type="RefSeq" id="XP_030110640.1">
    <molecule id="Q9CRD0-3"/>
    <property type="nucleotide sequence ID" value="XM_030254780.2"/>
</dbReference>
<dbReference type="RefSeq" id="XP_036021346.1">
    <molecule id="Q9CRD0-1"/>
    <property type="nucleotide sequence ID" value="XM_036165453.1"/>
</dbReference>
<dbReference type="RefSeq" id="XP_036021347.1">
    <molecule id="Q9CRD0-2"/>
    <property type="nucleotide sequence ID" value="XM_036165454.1"/>
</dbReference>
<dbReference type="RefSeq" id="XP_036021348.1">
    <molecule id="Q9CRD0-3"/>
    <property type="nucleotide sequence ID" value="XM_036165455.1"/>
</dbReference>
<dbReference type="BioGRID" id="212653">
    <property type="interactions" value="9"/>
</dbReference>
<dbReference type="FunCoup" id="Q9CRD0">
    <property type="interactions" value="3533"/>
</dbReference>
<dbReference type="STRING" id="10090.ENSMUSP00000031038"/>
<dbReference type="GlyGen" id="Q9CRD0">
    <property type="glycosylation" value="2 sites, 1 N-linked glycan (1 site), 1 O-linked glycan (1 site)"/>
</dbReference>
<dbReference type="iPTMnet" id="Q9CRD0"/>
<dbReference type="PhosphoSitePlus" id="Q9CRD0"/>
<dbReference type="SwissPalm" id="Q9CRD0"/>
<dbReference type="jPOST" id="Q9CRD0"/>
<dbReference type="PaxDb" id="10090-ENSMUSP00000031038"/>
<dbReference type="PeptideAtlas" id="Q9CRD0"/>
<dbReference type="ProteomicsDB" id="293481">
    <molecule id="Q9CRD0-1"/>
</dbReference>
<dbReference type="ProteomicsDB" id="293482">
    <molecule id="Q9CRD0-2"/>
</dbReference>
<dbReference type="ProteomicsDB" id="293483">
    <molecule id="Q9CRD0-3"/>
</dbReference>
<dbReference type="Pumba" id="Q9CRD0"/>
<dbReference type="Antibodypedia" id="23858">
    <property type="antibodies" value="229 antibodies from 32 providers"/>
</dbReference>
<dbReference type="DNASU" id="68095"/>
<dbReference type="Ensembl" id="ENSMUST00000031038.11">
    <molecule id="Q9CRD0-1"/>
    <property type="protein sequence ID" value="ENSMUSP00000031038.5"/>
    <property type="gene ID" value="ENSMUSG00000029152.14"/>
</dbReference>
<dbReference type="Ensembl" id="ENSMUST00000071081.13">
    <molecule id="Q9CRD0-3"/>
    <property type="protein sequence ID" value="ENSMUSP00000069412.7"/>
    <property type="gene ID" value="ENSMUSG00000029152.14"/>
</dbReference>
<dbReference type="Ensembl" id="ENSMUST00000166823.5">
    <molecule id="Q9CRD0-3"/>
    <property type="protein sequence ID" value="ENSMUSP00000128805.2"/>
    <property type="gene ID" value="ENSMUSG00000029152.14"/>
</dbReference>
<dbReference type="Ensembl" id="ENSMUST00000200935.4">
    <molecule id="Q9CRD0-2"/>
    <property type="protein sequence ID" value="ENSMUSP00000144515.2"/>
    <property type="gene ID" value="ENSMUSG00000029152.14"/>
</dbReference>
<dbReference type="Ensembl" id="ENSMUST00000202250.4">
    <molecule id="Q9CRD0-3"/>
    <property type="protein sequence ID" value="ENSMUSP00000143799.2"/>
    <property type="gene ID" value="ENSMUSG00000029152.14"/>
</dbReference>
<dbReference type="GeneID" id="68095"/>
<dbReference type="KEGG" id="mmu:68095"/>
<dbReference type="UCSC" id="uc008xss.2">
    <molecule id="Q9CRD0-1"/>
    <property type="organism name" value="mouse"/>
</dbReference>
<dbReference type="UCSC" id="uc008xst.2">
    <molecule id="Q9CRD0-3"/>
    <property type="organism name" value="mouse"/>
</dbReference>
<dbReference type="UCSC" id="uc008xsv.2">
    <molecule id="Q9CRD0-2"/>
    <property type="organism name" value="mouse"/>
</dbReference>
<dbReference type="AGR" id="MGI:1915345"/>
<dbReference type="CTD" id="54940"/>
<dbReference type="MGI" id="MGI:1915345">
    <property type="gene designation" value="Ociad1"/>
</dbReference>
<dbReference type="VEuPathDB" id="HostDB:ENSMUSG00000029152"/>
<dbReference type="eggNOG" id="ENOG502RXQR">
    <property type="taxonomic scope" value="Eukaryota"/>
</dbReference>
<dbReference type="GeneTree" id="ENSGT00530000063690"/>
<dbReference type="HOGENOM" id="CLU_083038_0_0_1"/>
<dbReference type="InParanoid" id="Q9CRD0"/>
<dbReference type="OMA" id="TYEVMLP"/>
<dbReference type="OrthoDB" id="6513616at2759"/>
<dbReference type="PhylomeDB" id="Q9CRD0"/>
<dbReference type="TreeFam" id="TF327106"/>
<dbReference type="BioGRID-ORCS" id="68095">
    <property type="hits" value="6 hits in 78 CRISPR screens"/>
</dbReference>
<dbReference type="ChiTaRS" id="Ociad1">
    <property type="organism name" value="mouse"/>
</dbReference>
<dbReference type="PRO" id="PR:Q9CRD0"/>
<dbReference type="Proteomes" id="UP000000589">
    <property type="component" value="Chromosome 5"/>
</dbReference>
<dbReference type="RNAct" id="Q9CRD0">
    <property type="molecule type" value="protein"/>
</dbReference>
<dbReference type="Bgee" id="ENSMUSG00000029152">
    <property type="expression patterns" value="Expressed in primary visual cortex and 119 other cell types or tissues"/>
</dbReference>
<dbReference type="ExpressionAtlas" id="Q9CRD0">
    <property type="expression patterns" value="baseline and differential"/>
</dbReference>
<dbReference type="GO" id="GO:0005768">
    <property type="term" value="C:endosome"/>
    <property type="evidence" value="ECO:0000314"/>
    <property type="project" value="UniProtKB"/>
</dbReference>
<dbReference type="GO" id="GO:0005739">
    <property type="term" value="C:mitochondrion"/>
    <property type="evidence" value="ECO:0007005"/>
    <property type="project" value="MGI"/>
</dbReference>
<dbReference type="GO" id="GO:2000736">
    <property type="term" value="P:regulation of stem cell differentiation"/>
    <property type="evidence" value="ECO:0000315"/>
    <property type="project" value="UniProtKB"/>
</dbReference>
<dbReference type="InterPro" id="IPR040187">
    <property type="entry name" value="OCAD1/2"/>
</dbReference>
<dbReference type="InterPro" id="IPR009764">
    <property type="entry name" value="OCIA_dom"/>
</dbReference>
<dbReference type="PANTHER" id="PTHR13336:SF4">
    <property type="entry name" value="OCIA DOMAIN-CONTAINING PROTEIN 1"/>
    <property type="match status" value="1"/>
</dbReference>
<dbReference type="PANTHER" id="PTHR13336">
    <property type="entry name" value="OVARIAN CARCINOMA IMMUNOREACTIVE ANTIGEN"/>
    <property type="match status" value="1"/>
</dbReference>
<dbReference type="Pfam" id="PF07051">
    <property type="entry name" value="OCIA"/>
    <property type="match status" value="1"/>
</dbReference>
<keyword id="KW-0025">Alternative splicing</keyword>
<keyword id="KW-0967">Endosome</keyword>
<keyword id="KW-0597">Phosphoprotein</keyword>
<keyword id="KW-1185">Reference proteome</keyword>
<gene>
    <name evidence="9" type="primary">Ociad1</name>
    <name type="synonym">Asrij</name>
</gene>
<organism>
    <name type="scientific">Mus musculus</name>
    <name type="common">Mouse</name>
    <dbReference type="NCBI Taxonomy" id="10090"/>
    <lineage>
        <taxon>Eukaryota</taxon>
        <taxon>Metazoa</taxon>
        <taxon>Chordata</taxon>
        <taxon>Craniata</taxon>
        <taxon>Vertebrata</taxon>
        <taxon>Euteleostomi</taxon>
        <taxon>Mammalia</taxon>
        <taxon>Eutheria</taxon>
        <taxon>Euarchontoglires</taxon>
        <taxon>Glires</taxon>
        <taxon>Rodentia</taxon>
        <taxon>Myomorpha</taxon>
        <taxon>Muroidea</taxon>
        <taxon>Muridae</taxon>
        <taxon>Murinae</taxon>
        <taxon>Mus</taxon>
        <taxon>Mus</taxon>
    </lineage>
</organism>
<reference key="1">
    <citation type="journal article" date="2003" name="Dev. Dyn.">
        <title>Embryonic stem cell and tissue-specific expression of a novel conserved gene, asrij.</title>
        <authorList>
            <person name="Mukhopadhyay A."/>
            <person name="Das D."/>
            <person name="Inamdar M.S."/>
        </authorList>
    </citation>
    <scope>NUCLEOTIDE SEQUENCE [MRNA] (ISOFORMS 1 AND 2)</scope>
    <scope>SUBCELLULAR LOCATION</scope>
    <scope>TISSUE SPECIFICITY</scope>
    <scope>DEVELOPMENTAL STAGE</scope>
    <source>
        <strain>C57BL/6J</strain>
    </source>
</reference>
<reference key="2">
    <citation type="journal article" date="2005" name="Science">
        <title>The transcriptional landscape of the mammalian genome.</title>
        <authorList>
            <person name="Carninci P."/>
            <person name="Kasukawa T."/>
            <person name="Katayama S."/>
            <person name="Gough J."/>
            <person name="Frith M.C."/>
            <person name="Maeda N."/>
            <person name="Oyama R."/>
            <person name="Ravasi T."/>
            <person name="Lenhard B."/>
            <person name="Wells C."/>
            <person name="Kodzius R."/>
            <person name="Shimokawa K."/>
            <person name="Bajic V.B."/>
            <person name="Brenner S.E."/>
            <person name="Batalov S."/>
            <person name="Forrest A.R."/>
            <person name="Zavolan M."/>
            <person name="Davis M.J."/>
            <person name="Wilming L.G."/>
            <person name="Aidinis V."/>
            <person name="Allen J.E."/>
            <person name="Ambesi-Impiombato A."/>
            <person name="Apweiler R."/>
            <person name="Aturaliya R.N."/>
            <person name="Bailey T.L."/>
            <person name="Bansal M."/>
            <person name="Baxter L."/>
            <person name="Beisel K.W."/>
            <person name="Bersano T."/>
            <person name="Bono H."/>
            <person name="Chalk A.M."/>
            <person name="Chiu K.P."/>
            <person name="Choudhary V."/>
            <person name="Christoffels A."/>
            <person name="Clutterbuck D.R."/>
            <person name="Crowe M.L."/>
            <person name="Dalla E."/>
            <person name="Dalrymple B.P."/>
            <person name="de Bono B."/>
            <person name="Della Gatta G."/>
            <person name="di Bernardo D."/>
            <person name="Down T."/>
            <person name="Engstrom P."/>
            <person name="Fagiolini M."/>
            <person name="Faulkner G."/>
            <person name="Fletcher C.F."/>
            <person name="Fukushima T."/>
            <person name="Furuno M."/>
            <person name="Futaki S."/>
            <person name="Gariboldi M."/>
            <person name="Georgii-Hemming P."/>
            <person name="Gingeras T.R."/>
            <person name="Gojobori T."/>
            <person name="Green R.E."/>
            <person name="Gustincich S."/>
            <person name="Harbers M."/>
            <person name="Hayashi Y."/>
            <person name="Hensch T.K."/>
            <person name="Hirokawa N."/>
            <person name="Hill D."/>
            <person name="Huminiecki L."/>
            <person name="Iacono M."/>
            <person name="Ikeo K."/>
            <person name="Iwama A."/>
            <person name="Ishikawa T."/>
            <person name="Jakt M."/>
            <person name="Kanapin A."/>
            <person name="Katoh M."/>
            <person name="Kawasawa Y."/>
            <person name="Kelso J."/>
            <person name="Kitamura H."/>
            <person name="Kitano H."/>
            <person name="Kollias G."/>
            <person name="Krishnan S.P."/>
            <person name="Kruger A."/>
            <person name="Kummerfeld S.K."/>
            <person name="Kurochkin I.V."/>
            <person name="Lareau L.F."/>
            <person name="Lazarevic D."/>
            <person name="Lipovich L."/>
            <person name="Liu J."/>
            <person name="Liuni S."/>
            <person name="McWilliam S."/>
            <person name="Madan Babu M."/>
            <person name="Madera M."/>
            <person name="Marchionni L."/>
            <person name="Matsuda H."/>
            <person name="Matsuzawa S."/>
            <person name="Miki H."/>
            <person name="Mignone F."/>
            <person name="Miyake S."/>
            <person name="Morris K."/>
            <person name="Mottagui-Tabar S."/>
            <person name="Mulder N."/>
            <person name="Nakano N."/>
            <person name="Nakauchi H."/>
            <person name="Ng P."/>
            <person name="Nilsson R."/>
            <person name="Nishiguchi S."/>
            <person name="Nishikawa S."/>
            <person name="Nori F."/>
            <person name="Ohara O."/>
            <person name="Okazaki Y."/>
            <person name="Orlando V."/>
            <person name="Pang K.C."/>
            <person name="Pavan W.J."/>
            <person name="Pavesi G."/>
            <person name="Pesole G."/>
            <person name="Petrovsky N."/>
            <person name="Piazza S."/>
            <person name="Reed J."/>
            <person name="Reid J.F."/>
            <person name="Ring B.Z."/>
            <person name="Ringwald M."/>
            <person name="Rost B."/>
            <person name="Ruan Y."/>
            <person name="Salzberg S.L."/>
            <person name="Sandelin A."/>
            <person name="Schneider C."/>
            <person name="Schoenbach C."/>
            <person name="Sekiguchi K."/>
            <person name="Semple C.A."/>
            <person name="Seno S."/>
            <person name="Sessa L."/>
            <person name="Sheng Y."/>
            <person name="Shibata Y."/>
            <person name="Shimada H."/>
            <person name="Shimada K."/>
            <person name="Silva D."/>
            <person name="Sinclair B."/>
            <person name="Sperling S."/>
            <person name="Stupka E."/>
            <person name="Sugiura K."/>
            <person name="Sultana R."/>
            <person name="Takenaka Y."/>
            <person name="Taki K."/>
            <person name="Tammoja K."/>
            <person name="Tan S.L."/>
            <person name="Tang S."/>
            <person name="Taylor M.S."/>
            <person name="Tegner J."/>
            <person name="Teichmann S.A."/>
            <person name="Ueda H.R."/>
            <person name="van Nimwegen E."/>
            <person name="Verardo R."/>
            <person name="Wei C.L."/>
            <person name="Yagi K."/>
            <person name="Yamanishi H."/>
            <person name="Zabarovsky E."/>
            <person name="Zhu S."/>
            <person name="Zimmer A."/>
            <person name="Hide W."/>
            <person name="Bult C."/>
            <person name="Grimmond S.M."/>
            <person name="Teasdale R.D."/>
            <person name="Liu E.T."/>
            <person name="Brusic V."/>
            <person name="Quackenbush J."/>
            <person name="Wahlestedt C."/>
            <person name="Mattick J.S."/>
            <person name="Hume D.A."/>
            <person name="Kai C."/>
            <person name="Sasaki D."/>
            <person name="Tomaru Y."/>
            <person name="Fukuda S."/>
            <person name="Kanamori-Katayama M."/>
            <person name="Suzuki M."/>
            <person name="Aoki J."/>
            <person name="Arakawa T."/>
            <person name="Iida J."/>
            <person name="Imamura K."/>
            <person name="Itoh M."/>
            <person name="Kato T."/>
            <person name="Kawaji H."/>
            <person name="Kawagashira N."/>
            <person name="Kawashima T."/>
            <person name="Kojima M."/>
            <person name="Kondo S."/>
            <person name="Konno H."/>
            <person name="Nakano K."/>
            <person name="Ninomiya N."/>
            <person name="Nishio T."/>
            <person name="Okada M."/>
            <person name="Plessy C."/>
            <person name="Shibata K."/>
            <person name="Shiraki T."/>
            <person name="Suzuki S."/>
            <person name="Tagami M."/>
            <person name="Waki K."/>
            <person name="Watahiki A."/>
            <person name="Okamura-Oho Y."/>
            <person name="Suzuki H."/>
            <person name="Kawai J."/>
            <person name="Hayashizaki Y."/>
        </authorList>
    </citation>
    <scope>NUCLEOTIDE SEQUENCE [LARGE SCALE MRNA] (ISOFORMS 1 AND 3)</scope>
    <source>
        <strain>C57BL/6J</strain>
        <strain>NOD</strain>
        <tissue>Brain cortex</tissue>
        <tissue>Cecum</tissue>
        <tissue>Corpora quadrigemina</tissue>
        <tissue>Medulla oblongata</tissue>
        <tissue>Pancreas</tissue>
        <tissue>Placenta</tissue>
        <tissue>Testis</tissue>
        <tissue>Thymus</tissue>
    </source>
</reference>
<reference key="3">
    <citation type="journal article" date="2004" name="Genome Res.">
        <title>The status, quality, and expansion of the NIH full-length cDNA project: the Mammalian Gene Collection (MGC).</title>
        <authorList>
            <consortium name="The MGC Project Team"/>
        </authorList>
    </citation>
    <scope>NUCLEOTIDE SEQUENCE [LARGE SCALE MRNA] (ISOFORM 3)</scope>
    <source>
        <strain>FVB/N</strain>
        <tissue>Mammary tumor</tissue>
    </source>
</reference>
<reference key="4">
    <citation type="journal article" date="2007" name="Proc. Natl. Acad. Sci. U.S.A.">
        <title>Large-scale phosphorylation analysis of mouse liver.</title>
        <authorList>
            <person name="Villen J."/>
            <person name="Beausoleil S.A."/>
            <person name="Gerber S.A."/>
            <person name="Gygi S.P."/>
        </authorList>
    </citation>
    <scope>PHOSPHORYLATION [LARGE SCALE ANALYSIS] AT SER-108</scope>
    <scope>IDENTIFICATION BY MASS SPECTROMETRY [LARGE SCALE ANALYSIS]</scope>
    <source>
        <tissue>Liver</tissue>
    </source>
</reference>
<reference key="5">
    <citation type="journal article" date="2010" name="Cell">
        <title>A tissue-specific atlas of mouse protein phosphorylation and expression.</title>
        <authorList>
            <person name="Huttlin E.L."/>
            <person name="Jedrychowski M.P."/>
            <person name="Elias J.E."/>
            <person name="Goswami T."/>
            <person name="Rad R."/>
            <person name="Beausoleil S.A."/>
            <person name="Villen J."/>
            <person name="Haas W."/>
            <person name="Sowa M.E."/>
            <person name="Gygi S.P."/>
        </authorList>
    </citation>
    <scope>PHOSPHORYLATION [LARGE SCALE ANALYSIS] AT SER-108 AND SER-193</scope>
    <scope>IDENTIFICATION BY MASS SPECTROMETRY [LARGE SCALE ANALYSIS]</scope>
    <source>
        <tissue>Brain</tissue>
        <tissue>Brown adipose tissue</tissue>
        <tissue>Heart</tissue>
        <tissue>Kidney</tissue>
        <tissue>Liver</tissue>
        <tissue>Lung</tissue>
        <tissue>Pancreas</tissue>
        <tissue>Spleen</tissue>
        <tissue>Testis</tissue>
    </source>
</reference>
<reference key="6">
    <citation type="journal article" date="2013" name="Cell Rep.">
        <title>Conserved regulation of the Jak/STAT pathway by the endosomal protein asrij maintains stem cell potency.</title>
        <authorList>
            <person name="Sinha A."/>
            <person name="Khadilkar R.J."/>
            <person name="Vinay K.S."/>
            <person name="Roychowdhury Sinha A."/>
            <person name="Inamdar M.S."/>
        </authorList>
    </citation>
    <scope>FUNCTION</scope>
    <scope>INDUCTION</scope>
    <scope>DOMAIN</scope>
    <scope>SUBUNIT</scope>
    <scope>SUBCELLULAR LOCATION</scope>
</reference>
<proteinExistence type="evidence at protein level"/>
<name>OCAD1_MOUSE</name>
<feature type="chain" id="PRO_0000299384" description="OCIA domain-containing protein 1">
    <location>
        <begin position="1"/>
        <end position="247"/>
    </location>
</feature>
<feature type="domain" description="OCIA">
    <location>
        <begin position="1"/>
        <end position="112"/>
    </location>
</feature>
<feature type="region of interest" description="Disordered" evidence="2">
    <location>
        <begin position="113"/>
        <end position="153"/>
    </location>
</feature>
<feature type="region of interest" description="Disordered" evidence="2">
    <location>
        <begin position="167"/>
        <end position="230"/>
    </location>
</feature>
<feature type="compositionally biased region" description="Polar residues" evidence="2">
    <location>
        <begin position="136"/>
        <end position="146"/>
    </location>
</feature>
<feature type="compositionally biased region" description="Polar residues" evidence="2">
    <location>
        <begin position="168"/>
        <end position="177"/>
    </location>
</feature>
<feature type="compositionally biased region" description="Basic and acidic residues" evidence="2">
    <location>
        <begin position="192"/>
        <end position="210"/>
    </location>
</feature>
<feature type="compositionally biased region" description="Basic and acidic residues" evidence="2">
    <location>
        <begin position="218"/>
        <end position="230"/>
    </location>
</feature>
<feature type="modified residue" description="Phosphoserine" evidence="10 11">
    <location>
        <position position="108"/>
    </location>
</feature>
<feature type="modified residue" description="Phosphoserine" evidence="1">
    <location>
        <position position="116"/>
    </location>
</feature>
<feature type="modified residue" description="Phosphoserine" evidence="1">
    <location>
        <position position="123"/>
    </location>
</feature>
<feature type="modified residue" description="Phosphoserine" evidence="11">
    <location>
        <position position="193"/>
    </location>
</feature>
<feature type="splice variant" id="VSP_027623" description="In isoform 2." evidence="5">
    <location>
        <begin position="185"/>
        <end position="235"/>
    </location>
</feature>
<feature type="splice variant" id="VSP_027624" description="In isoform 3." evidence="6 7">
    <original>PEPN</original>
    <variation>RNFS</variation>
    <location>
        <begin position="186"/>
        <end position="189"/>
    </location>
</feature>
<feature type="splice variant" id="VSP_027625" description="In isoform 3." evidence="6 7">
    <location>
        <begin position="190"/>
        <end position="247"/>
    </location>
</feature>
<feature type="sequence conflict" description="In Ref. 2; BAE41326." evidence="8" ref="2">
    <original>D</original>
    <variation>G</variation>
    <location>
        <position position="151"/>
    </location>
</feature>